<protein>
    <recommendedName>
        <fullName evidence="1">Cyclic pyranopterin monophosphate synthase</fullName>
        <ecNumber evidence="1">4.6.1.17</ecNumber>
    </recommendedName>
    <alternativeName>
        <fullName evidence="1">Molybdenum cofactor biosynthesis protein C</fullName>
    </alternativeName>
</protein>
<reference key="1">
    <citation type="submission" date="2008-04" db="EMBL/GenBank/DDBJ databases">
        <title>Complete sequence of chromosome 1 of Burkholderia ambifaria MC40-6.</title>
        <authorList>
            <person name="Copeland A."/>
            <person name="Lucas S."/>
            <person name="Lapidus A."/>
            <person name="Glavina del Rio T."/>
            <person name="Dalin E."/>
            <person name="Tice H."/>
            <person name="Pitluck S."/>
            <person name="Chain P."/>
            <person name="Malfatti S."/>
            <person name="Shin M."/>
            <person name="Vergez L."/>
            <person name="Lang D."/>
            <person name="Schmutz J."/>
            <person name="Larimer F."/>
            <person name="Land M."/>
            <person name="Hauser L."/>
            <person name="Kyrpides N."/>
            <person name="Lykidis A."/>
            <person name="Ramette A."/>
            <person name="Konstantinidis K."/>
            <person name="Tiedje J."/>
            <person name="Richardson P."/>
        </authorList>
    </citation>
    <scope>NUCLEOTIDE SEQUENCE [LARGE SCALE GENOMIC DNA]</scope>
    <source>
        <strain>MC40-6</strain>
    </source>
</reference>
<accession>B1YVX4</accession>
<comment type="function">
    <text evidence="1">Catalyzes the conversion of (8S)-3',8-cyclo-7,8-dihydroguanosine 5'-triphosphate to cyclic pyranopterin monophosphate (cPMP).</text>
</comment>
<comment type="catalytic activity">
    <reaction evidence="1">
        <text>(8S)-3',8-cyclo-7,8-dihydroguanosine 5'-triphosphate = cyclic pyranopterin phosphate + diphosphate</text>
        <dbReference type="Rhea" id="RHEA:49580"/>
        <dbReference type="ChEBI" id="CHEBI:33019"/>
        <dbReference type="ChEBI" id="CHEBI:59648"/>
        <dbReference type="ChEBI" id="CHEBI:131766"/>
        <dbReference type="EC" id="4.6.1.17"/>
    </reaction>
</comment>
<comment type="pathway">
    <text evidence="1">Cofactor biosynthesis; molybdopterin biosynthesis.</text>
</comment>
<comment type="subunit">
    <text evidence="1">Homohexamer; trimer of dimers.</text>
</comment>
<comment type="similarity">
    <text evidence="1">Belongs to the MoaC family.</text>
</comment>
<evidence type="ECO:0000255" key="1">
    <source>
        <dbReference type="HAMAP-Rule" id="MF_01224"/>
    </source>
</evidence>
<dbReference type="EC" id="4.6.1.17" evidence="1"/>
<dbReference type="EMBL" id="CP001025">
    <property type="protein sequence ID" value="ACB65035.1"/>
    <property type="molecule type" value="Genomic_DNA"/>
</dbReference>
<dbReference type="RefSeq" id="WP_012364618.1">
    <property type="nucleotide sequence ID" value="NC_010551.1"/>
</dbReference>
<dbReference type="SMR" id="B1YVX4"/>
<dbReference type="KEGG" id="bac:BamMC406_2558"/>
<dbReference type="HOGENOM" id="CLU_074693_1_1_4"/>
<dbReference type="OrthoDB" id="9794429at2"/>
<dbReference type="UniPathway" id="UPA00344"/>
<dbReference type="Proteomes" id="UP000001680">
    <property type="component" value="Chromosome 1"/>
</dbReference>
<dbReference type="GO" id="GO:0061799">
    <property type="term" value="F:cyclic pyranopterin monophosphate synthase activity"/>
    <property type="evidence" value="ECO:0007669"/>
    <property type="project" value="UniProtKB-UniRule"/>
</dbReference>
<dbReference type="GO" id="GO:0006777">
    <property type="term" value="P:Mo-molybdopterin cofactor biosynthetic process"/>
    <property type="evidence" value="ECO:0007669"/>
    <property type="project" value="UniProtKB-UniRule"/>
</dbReference>
<dbReference type="CDD" id="cd01420">
    <property type="entry name" value="MoaC_PE"/>
    <property type="match status" value="1"/>
</dbReference>
<dbReference type="Gene3D" id="3.30.70.640">
    <property type="entry name" value="Molybdopterin cofactor biosynthesis C (MoaC) domain"/>
    <property type="match status" value="1"/>
</dbReference>
<dbReference type="HAMAP" id="MF_01224_B">
    <property type="entry name" value="MoaC_B"/>
    <property type="match status" value="1"/>
</dbReference>
<dbReference type="InterPro" id="IPR023045">
    <property type="entry name" value="MoaC"/>
</dbReference>
<dbReference type="InterPro" id="IPR047594">
    <property type="entry name" value="MoaC_bact/euk"/>
</dbReference>
<dbReference type="InterPro" id="IPR036522">
    <property type="entry name" value="MoaC_sf"/>
</dbReference>
<dbReference type="InterPro" id="IPR050105">
    <property type="entry name" value="MoCo_biosynth_MoaA/MoaC"/>
</dbReference>
<dbReference type="InterPro" id="IPR002820">
    <property type="entry name" value="Mopterin_CF_biosynth-C_dom"/>
</dbReference>
<dbReference type="NCBIfam" id="TIGR00581">
    <property type="entry name" value="moaC"/>
    <property type="match status" value="1"/>
</dbReference>
<dbReference type="NCBIfam" id="NF006870">
    <property type="entry name" value="PRK09364.1"/>
    <property type="match status" value="1"/>
</dbReference>
<dbReference type="PANTHER" id="PTHR22960:SF29">
    <property type="entry name" value="CYCLIC PYRANOPTERIN MONOPHOSPHATE SYNTHASE"/>
    <property type="match status" value="1"/>
</dbReference>
<dbReference type="PANTHER" id="PTHR22960">
    <property type="entry name" value="MOLYBDOPTERIN COFACTOR SYNTHESIS PROTEIN A"/>
    <property type="match status" value="1"/>
</dbReference>
<dbReference type="Pfam" id="PF01967">
    <property type="entry name" value="MoaC"/>
    <property type="match status" value="1"/>
</dbReference>
<dbReference type="SUPFAM" id="SSF55040">
    <property type="entry name" value="Molybdenum cofactor biosynthesis protein C, MoaC"/>
    <property type="match status" value="1"/>
</dbReference>
<keyword id="KW-0456">Lyase</keyword>
<keyword id="KW-0501">Molybdenum cofactor biosynthesis</keyword>
<proteinExistence type="inferred from homology"/>
<gene>
    <name evidence="1" type="primary">moaC</name>
    <name type="ordered locus">BamMC406_2558</name>
</gene>
<sequence length="162" mass="17194">MSGLTHFDAAGHAHMVDVGGKQETQRIAIARGTIRMLPATFALIRDGKAKKGDVLGVARIAAIQGAKRTAELIPLCHPLALTRVAVDFELDDALPGVHCVAQVETFGRTGVEMEALTAVQVGLLTVYDMCKAVDRGMVITEVSVREKRGGKSGDWKAEDTAG</sequence>
<organism>
    <name type="scientific">Burkholderia ambifaria (strain MC40-6)</name>
    <dbReference type="NCBI Taxonomy" id="398577"/>
    <lineage>
        <taxon>Bacteria</taxon>
        <taxon>Pseudomonadati</taxon>
        <taxon>Pseudomonadota</taxon>
        <taxon>Betaproteobacteria</taxon>
        <taxon>Burkholderiales</taxon>
        <taxon>Burkholderiaceae</taxon>
        <taxon>Burkholderia</taxon>
        <taxon>Burkholderia cepacia complex</taxon>
    </lineage>
</organism>
<feature type="chain" id="PRO_1000139250" description="Cyclic pyranopterin monophosphate synthase">
    <location>
        <begin position="1"/>
        <end position="162"/>
    </location>
</feature>
<feature type="active site" evidence="1">
    <location>
        <position position="128"/>
    </location>
</feature>
<feature type="binding site" evidence="1">
    <location>
        <begin position="75"/>
        <end position="77"/>
    </location>
    <ligand>
        <name>substrate</name>
    </ligand>
</feature>
<feature type="binding site" evidence="1">
    <location>
        <begin position="113"/>
        <end position="114"/>
    </location>
    <ligand>
        <name>substrate</name>
    </ligand>
</feature>
<name>MOAC_BURA4</name>